<organism>
    <name type="scientific">Maricaulis maris (strain MCS10)</name>
    <name type="common">Caulobacter maris</name>
    <dbReference type="NCBI Taxonomy" id="394221"/>
    <lineage>
        <taxon>Bacteria</taxon>
        <taxon>Pseudomonadati</taxon>
        <taxon>Pseudomonadota</taxon>
        <taxon>Alphaproteobacteria</taxon>
        <taxon>Maricaulales</taxon>
        <taxon>Maricaulaceae</taxon>
        <taxon>Maricaulis</taxon>
    </lineage>
</organism>
<evidence type="ECO:0000255" key="1">
    <source>
        <dbReference type="HAMAP-Rule" id="MF_00440"/>
    </source>
</evidence>
<evidence type="ECO:0000256" key="2">
    <source>
        <dbReference type="SAM" id="MobiDB-lite"/>
    </source>
</evidence>
<proteinExistence type="inferred from homology"/>
<reference key="1">
    <citation type="submission" date="2006-08" db="EMBL/GenBank/DDBJ databases">
        <title>Complete sequence of Maricaulis maris MCS10.</title>
        <authorList>
            <consortium name="US DOE Joint Genome Institute"/>
            <person name="Copeland A."/>
            <person name="Lucas S."/>
            <person name="Lapidus A."/>
            <person name="Barry K."/>
            <person name="Detter J.C."/>
            <person name="Glavina del Rio T."/>
            <person name="Hammon N."/>
            <person name="Israni S."/>
            <person name="Dalin E."/>
            <person name="Tice H."/>
            <person name="Pitluck S."/>
            <person name="Saunders E."/>
            <person name="Brettin T."/>
            <person name="Bruce D."/>
            <person name="Han C."/>
            <person name="Tapia R."/>
            <person name="Gilna P."/>
            <person name="Schmutz J."/>
            <person name="Larimer F."/>
            <person name="Land M."/>
            <person name="Hauser L."/>
            <person name="Kyrpides N."/>
            <person name="Mikhailova N."/>
            <person name="Viollier P."/>
            <person name="Stephens C."/>
            <person name="Richardson P."/>
        </authorList>
    </citation>
    <scope>NUCLEOTIDE SEQUENCE [LARGE SCALE GENOMIC DNA]</scope>
    <source>
        <strain>MCS10</strain>
    </source>
</reference>
<sequence>MRCPFCGHPDTQVKDSRPAEDGNAIRRRRQCPSCAARFTTFERVQLRELTVMKKSGRRVPFDREKLNRSIQLAMQKRNIEPDRIDQMISGIVRRLESTGETDVTSDRVGELVMEGLKNLDAVAYVRYASVYKDFHKVEDFREFITDEALTAHFGPREDDDG</sequence>
<dbReference type="EMBL" id="CP000449">
    <property type="protein sequence ID" value="ABI65828.1"/>
    <property type="molecule type" value="Genomic_DNA"/>
</dbReference>
<dbReference type="RefSeq" id="WP_011643475.1">
    <property type="nucleotide sequence ID" value="NC_008347.1"/>
</dbReference>
<dbReference type="SMR" id="Q0APF9"/>
<dbReference type="STRING" id="394221.Mmar10_1536"/>
<dbReference type="KEGG" id="mmr:Mmar10_1536"/>
<dbReference type="eggNOG" id="COG1327">
    <property type="taxonomic scope" value="Bacteria"/>
</dbReference>
<dbReference type="HOGENOM" id="CLU_108412_0_1_5"/>
<dbReference type="OrthoDB" id="9807461at2"/>
<dbReference type="Proteomes" id="UP000001964">
    <property type="component" value="Chromosome"/>
</dbReference>
<dbReference type="GO" id="GO:0005524">
    <property type="term" value="F:ATP binding"/>
    <property type="evidence" value="ECO:0007669"/>
    <property type="project" value="UniProtKB-KW"/>
</dbReference>
<dbReference type="GO" id="GO:0003677">
    <property type="term" value="F:DNA binding"/>
    <property type="evidence" value="ECO:0007669"/>
    <property type="project" value="UniProtKB-KW"/>
</dbReference>
<dbReference type="GO" id="GO:0008270">
    <property type="term" value="F:zinc ion binding"/>
    <property type="evidence" value="ECO:0007669"/>
    <property type="project" value="UniProtKB-UniRule"/>
</dbReference>
<dbReference type="GO" id="GO:0045892">
    <property type="term" value="P:negative regulation of DNA-templated transcription"/>
    <property type="evidence" value="ECO:0007669"/>
    <property type="project" value="UniProtKB-UniRule"/>
</dbReference>
<dbReference type="HAMAP" id="MF_00440">
    <property type="entry name" value="NrdR"/>
    <property type="match status" value="1"/>
</dbReference>
<dbReference type="InterPro" id="IPR005144">
    <property type="entry name" value="ATP-cone_dom"/>
</dbReference>
<dbReference type="InterPro" id="IPR055173">
    <property type="entry name" value="NrdR-like_N"/>
</dbReference>
<dbReference type="InterPro" id="IPR003796">
    <property type="entry name" value="RNR_NrdR-like"/>
</dbReference>
<dbReference type="NCBIfam" id="TIGR00244">
    <property type="entry name" value="transcriptional regulator NrdR"/>
    <property type="match status" value="1"/>
</dbReference>
<dbReference type="PANTHER" id="PTHR30455">
    <property type="entry name" value="TRANSCRIPTIONAL REPRESSOR NRDR"/>
    <property type="match status" value="1"/>
</dbReference>
<dbReference type="PANTHER" id="PTHR30455:SF2">
    <property type="entry name" value="TRANSCRIPTIONAL REPRESSOR NRDR"/>
    <property type="match status" value="1"/>
</dbReference>
<dbReference type="Pfam" id="PF03477">
    <property type="entry name" value="ATP-cone"/>
    <property type="match status" value="1"/>
</dbReference>
<dbReference type="Pfam" id="PF22811">
    <property type="entry name" value="Zn_ribbon_NrdR"/>
    <property type="match status" value="1"/>
</dbReference>
<dbReference type="PROSITE" id="PS51161">
    <property type="entry name" value="ATP_CONE"/>
    <property type="match status" value="1"/>
</dbReference>
<feature type="chain" id="PRO_0000264185" description="Transcriptional repressor NrdR">
    <location>
        <begin position="1"/>
        <end position="161"/>
    </location>
</feature>
<feature type="domain" description="ATP-cone" evidence="1">
    <location>
        <begin position="49"/>
        <end position="139"/>
    </location>
</feature>
<feature type="zinc finger region" evidence="1">
    <location>
        <begin position="3"/>
        <end position="34"/>
    </location>
</feature>
<feature type="region of interest" description="Disordered" evidence="2">
    <location>
        <begin position="1"/>
        <end position="23"/>
    </location>
</feature>
<feature type="compositionally biased region" description="Basic and acidic residues" evidence="2">
    <location>
        <begin position="11"/>
        <end position="23"/>
    </location>
</feature>
<gene>
    <name evidence="1" type="primary">nrdR</name>
    <name type="ordered locus">Mmar10_1536</name>
</gene>
<protein>
    <recommendedName>
        <fullName evidence="1">Transcriptional repressor NrdR</fullName>
    </recommendedName>
</protein>
<name>NRDR_MARMM</name>
<comment type="function">
    <text evidence="1">Negatively regulates transcription of bacterial ribonucleotide reductase nrd genes and operons by binding to NrdR-boxes.</text>
</comment>
<comment type="cofactor">
    <cofactor evidence="1">
        <name>Zn(2+)</name>
        <dbReference type="ChEBI" id="CHEBI:29105"/>
    </cofactor>
    <text evidence="1">Binds 1 zinc ion.</text>
</comment>
<comment type="similarity">
    <text evidence="1">Belongs to the NrdR family.</text>
</comment>
<keyword id="KW-0067">ATP-binding</keyword>
<keyword id="KW-0238">DNA-binding</keyword>
<keyword id="KW-0479">Metal-binding</keyword>
<keyword id="KW-0547">Nucleotide-binding</keyword>
<keyword id="KW-1185">Reference proteome</keyword>
<keyword id="KW-0678">Repressor</keyword>
<keyword id="KW-0804">Transcription</keyword>
<keyword id="KW-0805">Transcription regulation</keyword>
<keyword id="KW-0862">Zinc</keyword>
<keyword id="KW-0863">Zinc-finger</keyword>
<accession>Q0APF9</accession>